<sequence length="110" mass="12633">MNLQEILKEIDFKKGEGLIPTIIQDFYSGEVLMLAYMNKESLEKTIETNTTWFWSRSREELWNKGATSGNLQYVKSIHIDCDGDTLLIKVEQVGPACHTGHRSCFYTTLI</sequence>
<reference key="1">
    <citation type="submission" date="2008-05" db="EMBL/GenBank/DDBJ databases">
        <title>Genome sequence of Clostridium botulinum Ba4 strain 657.</title>
        <authorList>
            <person name="Shrivastava S."/>
            <person name="Brown J.L."/>
            <person name="Bruce D."/>
            <person name="Detter C."/>
            <person name="Munk C."/>
            <person name="Smith L.A."/>
            <person name="Smith T.J."/>
            <person name="Sutton G."/>
            <person name="Brettin T.S."/>
        </authorList>
    </citation>
    <scope>NUCLEOTIDE SEQUENCE [LARGE SCALE GENOMIC DNA]</scope>
    <source>
        <strain>657 / Type Ba4</strain>
    </source>
</reference>
<comment type="function">
    <text evidence="1">Catalyzes the hydrolysis of the adenine ring of phosphoribosyl-AMP.</text>
</comment>
<comment type="catalytic activity">
    <reaction evidence="1">
        <text>1-(5-phospho-beta-D-ribosyl)-5'-AMP + H2O = 1-(5-phospho-beta-D-ribosyl)-5-[(5-phospho-beta-D-ribosylamino)methylideneamino]imidazole-4-carboxamide</text>
        <dbReference type="Rhea" id="RHEA:20049"/>
        <dbReference type="ChEBI" id="CHEBI:15377"/>
        <dbReference type="ChEBI" id="CHEBI:58435"/>
        <dbReference type="ChEBI" id="CHEBI:59457"/>
        <dbReference type="EC" id="3.5.4.19"/>
    </reaction>
</comment>
<comment type="cofactor">
    <cofactor evidence="1">
        <name>Mg(2+)</name>
        <dbReference type="ChEBI" id="CHEBI:18420"/>
    </cofactor>
    <text evidence="1">Binds 1 Mg(2+) ion per subunit.</text>
</comment>
<comment type="cofactor">
    <cofactor evidence="1">
        <name>Zn(2+)</name>
        <dbReference type="ChEBI" id="CHEBI:29105"/>
    </cofactor>
    <text evidence="1">Binds 1 zinc ion per subunit.</text>
</comment>
<comment type="pathway">
    <text evidence="1">Amino-acid biosynthesis; L-histidine biosynthesis; L-histidine from 5-phospho-alpha-D-ribose 1-diphosphate: step 3/9.</text>
</comment>
<comment type="subunit">
    <text evidence="1">Homodimer.</text>
</comment>
<comment type="subcellular location">
    <subcellularLocation>
        <location evidence="1">Cytoplasm</location>
    </subcellularLocation>
</comment>
<comment type="similarity">
    <text evidence="1">Belongs to the PRA-CH family.</text>
</comment>
<gene>
    <name evidence="1" type="primary">hisI</name>
    <name type="ordered locus">CLJ_B1680</name>
</gene>
<dbReference type="EC" id="3.5.4.19" evidence="1"/>
<dbReference type="EMBL" id="CP001083">
    <property type="protein sequence ID" value="ACQ52605.1"/>
    <property type="molecule type" value="Genomic_DNA"/>
</dbReference>
<dbReference type="RefSeq" id="WP_003360811.1">
    <property type="nucleotide sequence ID" value="NC_012658.1"/>
</dbReference>
<dbReference type="SMR" id="C3KVX7"/>
<dbReference type="KEGG" id="cbi:CLJ_B1680"/>
<dbReference type="HOGENOM" id="CLU_048577_5_3_9"/>
<dbReference type="UniPathway" id="UPA00031">
    <property type="reaction ID" value="UER00008"/>
</dbReference>
<dbReference type="Proteomes" id="UP000002333">
    <property type="component" value="Chromosome"/>
</dbReference>
<dbReference type="GO" id="GO:0005737">
    <property type="term" value="C:cytoplasm"/>
    <property type="evidence" value="ECO:0007669"/>
    <property type="project" value="UniProtKB-SubCell"/>
</dbReference>
<dbReference type="GO" id="GO:0000287">
    <property type="term" value="F:magnesium ion binding"/>
    <property type="evidence" value="ECO:0007669"/>
    <property type="project" value="UniProtKB-UniRule"/>
</dbReference>
<dbReference type="GO" id="GO:0004635">
    <property type="term" value="F:phosphoribosyl-AMP cyclohydrolase activity"/>
    <property type="evidence" value="ECO:0007669"/>
    <property type="project" value="UniProtKB-UniRule"/>
</dbReference>
<dbReference type="GO" id="GO:0008270">
    <property type="term" value="F:zinc ion binding"/>
    <property type="evidence" value="ECO:0007669"/>
    <property type="project" value="UniProtKB-UniRule"/>
</dbReference>
<dbReference type="GO" id="GO:0000105">
    <property type="term" value="P:L-histidine biosynthetic process"/>
    <property type="evidence" value="ECO:0007669"/>
    <property type="project" value="UniProtKB-UniRule"/>
</dbReference>
<dbReference type="FunFam" id="3.10.20.810:FF:000001">
    <property type="entry name" value="Histidine biosynthesis bifunctional protein HisIE"/>
    <property type="match status" value="1"/>
</dbReference>
<dbReference type="Gene3D" id="3.10.20.810">
    <property type="entry name" value="Phosphoribosyl-AMP cyclohydrolase"/>
    <property type="match status" value="1"/>
</dbReference>
<dbReference type="HAMAP" id="MF_01021">
    <property type="entry name" value="HisI"/>
    <property type="match status" value="1"/>
</dbReference>
<dbReference type="InterPro" id="IPR026660">
    <property type="entry name" value="PRA-CH"/>
</dbReference>
<dbReference type="InterPro" id="IPR002496">
    <property type="entry name" value="PRib_AMP_CycHydrolase_dom"/>
</dbReference>
<dbReference type="InterPro" id="IPR038019">
    <property type="entry name" value="PRib_AMP_CycHydrolase_sf"/>
</dbReference>
<dbReference type="NCBIfam" id="NF000768">
    <property type="entry name" value="PRK00051.1"/>
    <property type="match status" value="1"/>
</dbReference>
<dbReference type="PANTHER" id="PTHR42945">
    <property type="entry name" value="HISTIDINE BIOSYNTHESIS BIFUNCTIONAL PROTEIN"/>
    <property type="match status" value="1"/>
</dbReference>
<dbReference type="PANTHER" id="PTHR42945:SF1">
    <property type="entry name" value="HISTIDINE BIOSYNTHESIS BIFUNCTIONAL PROTEIN HIS7"/>
    <property type="match status" value="1"/>
</dbReference>
<dbReference type="Pfam" id="PF01502">
    <property type="entry name" value="PRA-CH"/>
    <property type="match status" value="1"/>
</dbReference>
<dbReference type="SUPFAM" id="SSF141734">
    <property type="entry name" value="HisI-like"/>
    <property type="match status" value="1"/>
</dbReference>
<protein>
    <recommendedName>
        <fullName evidence="1">Phosphoribosyl-AMP cyclohydrolase</fullName>
        <shortName evidence="1">PRA-CH</shortName>
        <ecNumber evidence="1">3.5.4.19</ecNumber>
    </recommendedName>
</protein>
<feature type="chain" id="PRO_1000213299" description="Phosphoribosyl-AMP cyclohydrolase">
    <location>
        <begin position="1"/>
        <end position="110"/>
    </location>
</feature>
<feature type="binding site" evidence="1">
    <location>
        <position position="80"/>
    </location>
    <ligand>
        <name>Mg(2+)</name>
        <dbReference type="ChEBI" id="CHEBI:18420"/>
    </ligand>
</feature>
<feature type="binding site" evidence="1">
    <location>
        <position position="81"/>
    </location>
    <ligand>
        <name>Zn(2+)</name>
        <dbReference type="ChEBI" id="CHEBI:29105"/>
        <note>ligand shared between dimeric partners</note>
    </ligand>
</feature>
<feature type="binding site" evidence="1">
    <location>
        <position position="82"/>
    </location>
    <ligand>
        <name>Mg(2+)</name>
        <dbReference type="ChEBI" id="CHEBI:18420"/>
    </ligand>
</feature>
<feature type="binding site" evidence="1">
    <location>
        <position position="84"/>
    </location>
    <ligand>
        <name>Mg(2+)</name>
        <dbReference type="ChEBI" id="CHEBI:18420"/>
    </ligand>
</feature>
<feature type="binding site" evidence="1">
    <location>
        <position position="97"/>
    </location>
    <ligand>
        <name>Zn(2+)</name>
        <dbReference type="ChEBI" id="CHEBI:29105"/>
        <note>ligand shared between dimeric partners</note>
    </ligand>
</feature>
<feature type="binding site" evidence="1">
    <location>
        <position position="104"/>
    </location>
    <ligand>
        <name>Zn(2+)</name>
        <dbReference type="ChEBI" id="CHEBI:29105"/>
        <note>ligand shared between dimeric partners</note>
    </ligand>
</feature>
<name>HIS3_CLOB6</name>
<keyword id="KW-0028">Amino-acid biosynthesis</keyword>
<keyword id="KW-0963">Cytoplasm</keyword>
<keyword id="KW-0368">Histidine biosynthesis</keyword>
<keyword id="KW-0378">Hydrolase</keyword>
<keyword id="KW-0460">Magnesium</keyword>
<keyword id="KW-0479">Metal-binding</keyword>
<keyword id="KW-0862">Zinc</keyword>
<evidence type="ECO:0000255" key="1">
    <source>
        <dbReference type="HAMAP-Rule" id="MF_01021"/>
    </source>
</evidence>
<proteinExistence type="inferred from homology"/>
<accession>C3KVX7</accession>
<organism>
    <name type="scientific">Clostridium botulinum (strain 657 / Type Ba4)</name>
    <dbReference type="NCBI Taxonomy" id="515621"/>
    <lineage>
        <taxon>Bacteria</taxon>
        <taxon>Bacillati</taxon>
        <taxon>Bacillota</taxon>
        <taxon>Clostridia</taxon>
        <taxon>Eubacteriales</taxon>
        <taxon>Clostridiaceae</taxon>
        <taxon>Clostridium</taxon>
    </lineage>
</organism>